<keyword id="KW-1003">Cell membrane</keyword>
<keyword id="KW-0255">Endonuclease</keyword>
<keyword id="KW-0378">Hydrolase</keyword>
<keyword id="KW-0472">Membrane</keyword>
<keyword id="KW-0540">Nuclease</keyword>
<keyword id="KW-0694">RNA-binding</keyword>
<keyword id="KW-0812">Transmembrane</keyword>
<keyword id="KW-1133">Transmembrane helix</keyword>
<gene>
    <name evidence="1" type="primary">rny</name>
    <name type="ordered locus">TRQ2_0962</name>
</gene>
<name>RNY_THESQ</name>
<feature type="chain" id="PRO_0000344967" description="Ribonuclease Y">
    <location>
        <begin position="1"/>
        <end position="507"/>
    </location>
</feature>
<feature type="transmembrane region" description="Helical" evidence="1">
    <location>
        <begin position="1"/>
        <end position="21"/>
    </location>
</feature>
<feature type="domain" description="KH" evidence="1">
    <location>
        <begin position="197"/>
        <end position="282"/>
    </location>
</feature>
<feature type="domain" description="HD" evidence="2">
    <location>
        <begin position="323"/>
        <end position="416"/>
    </location>
</feature>
<dbReference type="EC" id="3.1.-.-" evidence="1"/>
<dbReference type="EMBL" id="CP000969">
    <property type="protein sequence ID" value="ACB09313.1"/>
    <property type="molecule type" value="Genomic_DNA"/>
</dbReference>
<dbReference type="KEGG" id="trq:TRQ2_0962"/>
<dbReference type="HOGENOM" id="CLU_028328_1_0_0"/>
<dbReference type="Proteomes" id="UP000001687">
    <property type="component" value="Chromosome"/>
</dbReference>
<dbReference type="GO" id="GO:0005886">
    <property type="term" value="C:plasma membrane"/>
    <property type="evidence" value="ECO:0007669"/>
    <property type="project" value="UniProtKB-SubCell"/>
</dbReference>
<dbReference type="GO" id="GO:0003723">
    <property type="term" value="F:RNA binding"/>
    <property type="evidence" value="ECO:0007669"/>
    <property type="project" value="UniProtKB-UniRule"/>
</dbReference>
<dbReference type="GO" id="GO:0004521">
    <property type="term" value="F:RNA endonuclease activity"/>
    <property type="evidence" value="ECO:0007669"/>
    <property type="project" value="UniProtKB-UniRule"/>
</dbReference>
<dbReference type="GO" id="GO:0006402">
    <property type="term" value="P:mRNA catabolic process"/>
    <property type="evidence" value="ECO:0007669"/>
    <property type="project" value="UniProtKB-UniRule"/>
</dbReference>
<dbReference type="CDD" id="cd00077">
    <property type="entry name" value="HDc"/>
    <property type="match status" value="1"/>
</dbReference>
<dbReference type="CDD" id="cd22431">
    <property type="entry name" value="KH-I_RNaseY"/>
    <property type="match status" value="1"/>
</dbReference>
<dbReference type="FunFam" id="1.10.3210.10:FF:000022">
    <property type="entry name" value="Ribonuclease Y"/>
    <property type="match status" value="1"/>
</dbReference>
<dbReference type="Gene3D" id="1.10.3210.10">
    <property type="entry name" value="Hypothetical protein af1432"/>
    <property type="match status" value="1"/>
</dbReference>
<dbReference type="Gene3D" id="3.30.1370.10">
    <property type="entry name" value="K Homology domain, type 1"/>
    <property type="match status" value="1"/>
</dbReference>
<dbReference type="HAMAP" id="MF_00335">
    <property type="entry name" value="RNase_Y"/>
    <property type="match status" value="1"/>
</dbReference>
<dbReference type="InterPro" id="IPR003607">
    <property type="entry name" value="HD/PDEase_dom"/>
</dbReference>
<dbReference type="InterPro" id="IPR006674">
    <property type="entry name" value="HD_domain"/>
</dbReference>
<dbReference type="InterPro" id="IPR006675">
    <property type="entry name" value="HDIG_dom"/>
</dbReference>
<dbReference type="InterPro" id="IPR004087">
    <property type="entry name" value="KH_dom"/>
</dbReference>
<dbReference type="InterPro" id="IPR004088">
    <property type="entry name" value="KH_dom_type_1"/>
</dbReference>
<dbReference type="InterPro" id="IPR036612">
    <property type="entry name" value="KH_dom_type_1_sf"/>
</dbReference>
<dbReference type="InterPro" id="IPR017705">
    <property type="entry name" value="Ribonuclease_Y"/>
</dbReference>
<dbReference type="InterPro" id="IPR022711">
    <property type="entry name" value="RNase_Y_N"/>
</dbReference>
<dbReference type="NCBIfam" id="TIGR00277">
    <property type="entry name" value="HDIG"/>
    <property type="match status" value="1"/>
</dbReference>
<dbReference type="NCBIfam" id="TIGR03319">
    <property type="entry name" value="RNase_Y"/>
    <property type="match status" value="1"/>
</dbReference>
<dbReference type="PANTHER" id="PTHR12826">
    <property type="entry name" value="RIBONUCLEASE Y"/>
    <property type="match status" value="1"/>
</dbReference>
<dbReference type="PANTHER" id="PTHR12826:SF15">
    <property type="entry name" value="RIBONUCLEASE Y"/>
    <property type="match status" value="1"/>
</dbReference>
<dbReference type="Pfam" id="PF01966">
    <property type="entry name" value="HD"/>
    <property type="match status" value="1"/>
</dbReference>
<dbReference type="Pfam" id="PF00013">
    <property type="entry name" value="KH_1"/>
    <property type="match status" value="1"/>
</dbReference>
<dbReference type="Pfam" id="PF12072">
    <property type="entry name" value="RNase_Y_N"/>
    <property type="match status" value="1"/>
</dbReference>
<dbReference type="SMART" id="SM00471">
    <property type="entry name" value="HDc"/>
    <property type="match status" value="1"/>
</dbReference>
<dbReference type="SMART" id="SM00322">
    <property type="entry name" value="KH"/>
    <property type="match status" value="1"/>
</dbReference>
<dbReference type="SUPFAM" id="SSF54791">
    <property type="entry name" value="Eukaryotic type KH-domain (KH-domain type I)"/>
    <property type="match status" value="1"/>
</dbReference>
<dbReference type="SUPFAM" id="SSF109604">
    <property type="entry name" value="HD-domain/PDEase-like"/>
    <property type="match status" value="1"/>
</dbReference>
<dbReference type="PROSITE" id="PS51831">
    <property type="entry name" value="HD"/>
    <property type="match status" value="1"/>
</dbReference>
<dbReference type="PROSITE" id="PS50084">
    <property type="entry name" value="KH_TYPE_1"/>
    <property type="match status" value="1"/>
</dbReference>
<comment type="function">
    <text evidence="1">Endoribonuclease that initiates mRNA decay.</text>
</comment>
<comment type="subcellular location">
    <subcellularLocation>
        <location evidence="1">Cell membrane</location>
        <topology evidence="1">Single-pass membrane protein</topology>
    </subcellularLocation>
</comment>
<comment type="similarity">
    <text evidence="1">Belongs to the RNase Y family.</text>
</comment>
<protein>
    <recommendedName>
        <fullName evidence="1">Ribonuclease Y</fullName>
        <shortName evidence="1">RNase Y</shortName>
        <ecNumber evidence="1">3.1.-.-</ecNumber>
    </recommendedName>
</protein>
<sequence>MLWYIVAGAGGLLIGYLIANYQINQKLRKAKEDAQTIIEKAEKEANEIKKKAIIEGREEVHRLREEFEKERSRREEELRALEERLLKREELLTRKEENLEKREQQVEELKANLEEKMREVEEKEKRIDEELKRLAGMTVEEARELILEEARQRYEHDLAKLYKEMKEQVEEEAEKEAKKVIAFAVQRYAPDYVGEITVSTVSLPSDDMKGRIIGREGRNIRTFEKITGVDLIIDDTPEVVVLSCFNPLRREIARITLEKLVADGRIHPARIEEMYEKAKQEVEKAIKEAGQEATFKAGVMGLHPELVKLLGKLKYRTSYGQNVLNHSIEVALLAGYMASELGLNADKARRGGLLHDIGKAVDQELEGSHTTIGAELARRYGEKEDIINMILSHHGEEEPMTPEAVLVAAADALSAARPGARRESLENYIKRLMKLEEIAKSFKYVEKAYAIQAGREIRVIVEPDKVDDALAEKLAYDISKKIEEELEYPGVLKVVVIREKRSVAYAK</sequence>
<proteinExistence type="inferred from homology"/>
<evidence type="ECO:0000255" key="1">
    <source>
        <dbReference type="HAMAP-Rule" id="MF_00335"/>
    </source>
</evidence>
<evidence type="ECO:0000255" key="2">
    <source>
        <dbReference type="PROSITE-ProRule" id="PRU01175"/>
    </source>
</evidence>
<reference key="1">
    <citation type="journal article" date="2011" name="J. Bacteriol.">
        <title>Genome sequence of Thermotoga sp. strain RQ2, a hyperthermophilic bacterium isolated from a geothermally heated region of the seafloor near Ribeira Quente, the Azores.</title>
        <authorList>
            <person name="Swithers K.S."/>
            <person name="DiPippo J.L."/>
            <person name="Bruce D.C."/>
            <person name="Detter C."/>
            <person name="Tapia R."/>
            <person name="Han S."/>
            <person name="Saunders E."/>
            <person name="Goodwin L.A."/>
            <person name="Han J."/>
            <person name="Woyke T."/>
            <person name="Pitluck S."/>
            <person name="Pennacchio L."/>
            <person name="Nolan M."/>
            <person name="Mikhailova N."/>
            <person name="Lykidis A."/>
            <person name="Land M.L."/>
            <person name="Brettin T."/>
            <person name="Stetter K.O."/>
            <person name="Nelson K.E."/>
            <person name="Gogarten J.P."/>
            <person name="Noll K.M."/>
        </authorList>
    </citation>
    <scope>NUCLEOTIDE SEQUENCE [LARGE SCALE GENOMIC DNA]</scope>
    <source>
        <strain>RQ2</strain>
    </source>
</reference>
<organism>
    <name type="scientific">Thermotoga sp. (strain RQ2)</name>
    <dbReference type="NCBI Taxonomy" id="126740"/>
    <lineage>
        <taxon>Bacteria</taxon>
        <taxon>Thermotogati</taxon>
        <taxon>Thermotogota</taxon>
        <taxon>Thermotogae</taxon>
        <taxon>Thermotogales</taxon>
        <taxon>Thermotogaceae</taxon>
        <taxon>Thermotoga</taxon>
    </lineage>
</organism>
<accession>B1LAG5</accession>